<protein>
    <recommendedName>
        <fullName>T-box transcription factor TBX5</fullName>
        <shortName>T-box protein 5</shortName>
    </recommendedName>
</protein>
<accession>Q9PWE8</accession>
<accession>O73719</accession>
<dbReference type="EMBL" id="AF033671">
    <property type="protein sequence ID" value="AAC41299.1"/>
    <property type="status" value="ALT_FRAME"/>
    <property type="molecule type" value="mRNA"/>
</dbReference>
<dbReference type="EMBL" id="AF069396">
    <property type="protein sequence ID" value="AAC23683.2"/>
    <property type="molecule type" value="mRNA"/>
</dbReference>
<dbReference type="RefSeq" id="NP_989504.1">
    <property type="nucleotide sequence ID" value="NM_204173.1"/>
</dbReference>
<dbReference type="RefSeq" id="XP_015150318.1">
    <property type="nucleotide sequence ID" value="XM_015294832.1"/>
</dbReference>
<dbReference type="SMR" id="Q9PWE8"/>
<dbReference type="FunCoup" id="Q9PWE8">
    <property type="interactions" value="2"/>
</dbReference>
<dbReference type="IntAct" id="Q9PWE8">
    <property type="interactions" value="1"/>
</dbReference>
<dbReference type="STRING" id="9031.ENSGALP00000013419"/>
<dbReference type="PaxDb" id="9031-ENSGALP00000013419"/>
<dbReference type="GeneID" id="373988"/>
<dbReference type="KEGG" id="gga:373988"/>
<dbReference type="CTD" id="6910"/>
<dbReference type="VEuPathDB" id="HostDB:geneid_373988"/>
<dbReference type="eggNOG" id="KOG3585">
    <property type="taxonomic scope" value="Eukaryota"/>
</dbReference>
<dbReference type="HOGENOM" id="CLU_037025_1_0_1"/>
<dbReference type="InParanoid" id="Q9PWE8"/>
<dbReference type="OrthoDB" id="7442607at2759"/>
<dbReference type="PhylomeDB" id="Q9PWE8"/>
<dbReference type="TreeFam" id="TF106341"/>
<dbReference type="Reactome" id="R-GGA-2032785">
    <property type="pathway name" value="YAP1- and WWTR1 (TAZ)-stimulated gene expression"/>
</dbReference>
<dbReference type="PRO" id="PR:Q9PWE8"/>
<dbReference type="Proteomes" id="UP000000539">
    <property type="component" value="Chromosome 15"/>
</dbReference>
<dbReference type="Bgee" id="ENSGALG00000008253">
    <property type="expression patterns" value="Expressed in heart and 2 other cell types or tissues"/>
</dbReference>
<dbReference type="GO" id="GO:0015629">
    <property type="term" value="C:actin cytoskeleton"/>
    <property type="evidence" value="ECO:0000314"/>
    <property type="project" value="AgBase"/>
</dbReference>
<dbReference type="GO" id="GO:0005884">
    <property type="term" value="C:actin filament"/>
    <property type="evidence" value="ECO:0000314"/>
    <property type="project" value="AgBase"/>
</dbReference>
<dbReference type="GO" id="GO:0000785">
    <property type="term" value="C:chromatin"/>
    <property type="evidence" value="ECO:0000318"/>
    <property type="project" value="GO_Central"/>
</dbReference>
<dbReference type="GO" id="GO:0005737">
    <property type="term" value="C:cytoplasm"/>
    <property type="evidence" value="ECO:0000314"/>
    <property type="project" value="AgBase"/>
</dbReference>
<dbReference type="GO" id="GO:0005634">
    <property type="term" value="C:nucleus"/>
    <property type="evidence" value="ECO:0000314"/>
    <property type="project" value="AgBase"/>
</dbReference>
<dbReference type="GO" id="GO:0032991">
    <property type="term" value="C:protein-containing complex"/>
    <property type="evidence" value="ECO:0000250"/>
    <property type="project" value="UniProtKB"/>
</dbReference>
<dbReference type="GO" id="GO:0032993">
    <property type="term" value="C:protein-DNA complex"/>
    <property type="evidence" value="ECO:0000250"/>
    <property type="project" value="UniProtKB"/>
</dbReference>
<dbReference type="GO" id="GO:0001725">
    <property type="term" value="C:stress fiber"/>
    <property type="evidence" value="ECO:0000314"/>
    <property type="project" value="AgBase"/>
</dbReference>
<dbReference type="GO" id="GO:0003677">
    <property type="term" value="F:DNA binding"/>
    <property type="evidence" value="ECO:0000250"/>
    <property type="project" value="UniProtKB"/>
</dbReference>
<dbReference type="GO" id="GO:0003700">
    <property type="term" value="F:DNA-binding transcription factor activity"/>
    <property type="evidence" value="ECO:0000250"/>
    <property type="project" value="UniProtKB"/>
</dbReference>
<dbReference type="GO" id="GO:0000981">
    <property type="term" value="F:DNA-binding transcription factor activity, RNA polymerase II-specific"/>
    <property type="evidence" value="ECO:0000250"/>
    <property type="project" value="UniProtKB"/>
</dbReference>
<dbReference type="GO" id="GO:0030274">
    <property type="term" value="F:LIM domain binding"/>
    <property type="evidence" value="ECO:0000353"/>
    <property type="project" value="AgBase"/>
</dbReference>
<dbReference type="GO" id="GO:0051087">
    <property type="term" value="F:protein-folding chaperone binding"/>
    <property type="evidence" value="ECO:0000353"/>
    <property type="project" value="AgBase"/>
</dbReference>
<dbReference type="GO" id="GO:0000978">
    <property type="term" value="F:RNA polymerase II cis-regulatory region sequence-specific DNA binding"/>
    <property type="evidence" value="ECO:0000250"/>
    <property type="project" value="UniProtKB"/>
</dbReference>
<dbReference type="GO" id="GO:0097110">
    <property type="term" value="F:scaffold protein binding"/>
    <property type="evidence" value="ECO:0000353"/>
    <property type="project" value="AgBase"/>
</dbReference>
<dbReference type="GO" id="GO:0043565">
    <property type="term" value="F:sequence-specific DNA binding"/>
    <property type="evidence" value="ECO:0000250"/>
    <property type="project" value="UniProtKB"/>
</dbReference>
<dbReference type="GO" id="GO:0048513">
    <property type="term" value="P:animal organ development"/>
    <property type="evidence" value="ECO:0000250"/>
    <property type="project" value="UniProtKB"/>
</dbReference>
<dbReference type="GO" id="GO:0003218">
    <property type="term" value="P:cardiac left ventricle formation"/>
    <property type="evidence" value="ECO:0000270"/>
    <property type="project" value="BHF-UCL"/>
</dbReference>
<dbReference type="GO" id="GO:0001708">
    <property type="term" value="P:cell fate specification"/>
    <property type="evidence" value="ECO:0000318"/>
    <property type="project" value="GO_Central"/>
</dbReference>
<dbReference type="GO" id="GO:0007267">
    <property type="term" value="P:cell-cell signaling"/>
    <property type="evidence" value="ECO:0000250"/>
    <property type="project" value="UniProtKB"/>
</dbReference>
<dbReference type="GO" id="GO:0035115">
    <property type="term" value="P:embryonic forelimb morphogenesis"/>
    <property type="evidence" value="ECO:0000315"/>
    <property type="project" value="AgBase"/>
</dbReference>
<dbReference type="GO" id="GO:0030326">
    <property type="term" value="P:embryonic limb morphogenesis"/>
    <property type="evidence" value="ECO:0000250"/>
    <property type="project" value="UniProtKB"/>
</dbReference>
<dbReference type="GO" id="GO:0007507">
    <property type="term" value="P:heart development"/>
    <property type="evidence" value="ECO:0000250"/>
    <property type="project" value="UniProtKB"/>
</dbReference>
<dbReference type="GO" id="GO:0035137">
    <property type="term" value="P:hindlimb morphogenesis"/>
    <property type="evidence" value="ECO:0000304"/>
    <property type="project" value="AgBase"/>
</dbReference>
<dbReference type="GO" id="GO:0060174">
    <property type="term" value="P:limb bud formation"/>
    <property type="evidence" value="ECO:0000315"/>
    <property type="project" value="AgBase"/>
</dbReference>
<dbReference type="GO" id="GO:0060173">
    <property type="term" value="P:limb development"/>
    <property type="evidence" value="ECO:0000304"/>
    <property type="project" value="AgBase"/>
</dbReference>
<dbReference type="GO" id="GO:0060044">
    <property type="term" value="P:negative regulation of cardiac muscle cell proliferation"/>
    <property type="evidence" value="ECO:0000250"/>
    <property type="project" value="UniProtKB"/>
</dbReference>
<dbReference type="GO" id="GO:0030336">
    <property type="term" value="P:negative regulation of cell migration"/>
    <property type="evidence" value="ECO:0000250"/>
    <property type="project" value="UniProtKB"/>
</dbReference>
<dbReference type="GO" id="GO:0008285">
    <property type="term" value="P:negative regulation of cell population proliferation"/>
    <property type="evidence" value="ECO:0000250"/>
    <property type="project" value="UniProtKB"/>
</dbReference>
<dbReference type="GO" id="GO:0007389">
    <property type="term" value="P:pattern specification process"/>
    <property type="evidence" value="ECO:0000318"/>
    <property type="project" value="GO_Central"/>
</dbReference>
<dbReference type="GO" id="GO:0060039">
    <property type="term" value="P:pericardium development"/>
    <property type="evidence" value="ECO:0000250"/>
    <property type="project" value="UniProtKB"/>
</dbReference>
<dbReference type="GO" id="GO:0051891">
    <property type="term" value="P:positive regulation of cardioblast differentiation"/>
    <property type="evidence" value="ECO:0000250"/>
    <property type="project" value="UniProtKB"/>
</dbReference>
<dbReference type="GO" id="GO:0045893">
    <property type="term" value="P:positive regulation of DNA-templated transcription"/>
    <property type="evidence" value="ECO:0000314"/>
    <property type="project" value="AgBase"/>
</dbReference>
<dbReference type="GO" id="GO:0045944">
    <property type="term" value="P:positive regulation of transcription by RNA polymerase II"/>
    <property type="evidence" value="ECO:0000250"/>
    <property type="project" value="UniProtKB"/>
</dbReference>
<dbReference type="GO" id="GO:0010468">
    <property type="term" value="P:regulation of gene expression"/>
    <property type="evidence" value="ECO:0000315"/>
    <property type="project" value="AgBase"/>
</dbReference>
<dbReference type="GO" id="GO:0006357">
    <property type="term" value="P:regulation of transcription by RNA polymerase II"/>
    <property type="evidence" value="ECO:0000318"/>
    <property type="project" value="GO_Central"/>
</dbReference>
<dbReference type="GO" id="GO:0032526">
    <property type="term" value="P:response to retinoic acid"/>
    <property type="evidence" value="ECO:0000304"/>
    <property type="project" value="AgBase"/>
</dbReference>
<dbReference type="GO" id="GO:0003281">
    <property type="term" value="P:ventricular septum development"/>
    <property type="evidence" value="ECO:0000270"/>
    <property type="project" value="BHF-UCL"/>
</dbReference>
<dbReference type="CDD" id="cd20189">
    <property type="entry name" value="T-box_TBX4_5-like"/>
    <property type="match status" value="1"/>
</dbReference>
<dbReference type="FunFam" id="2.60.40.820:FF:000005">
    <property type="entry name" value="T-box transcription factor TBX5"/>
    <property type="match status" value="1"/>
</dbReference>
<dbReference type="Gene3D" id="2.60.40.820">
    <property type="entry name" value="Transcription factor, T-box"/>
    <property type="match status" value="1"/>
</dbReference>
<dbReference type="InterPro" id="IPR008967">
    <property type="entry name" value="p53-like_TF_DNA-bd_sf"/>
</dbReference>
<dbReference type="InterPro" id="IPR046360">
    <property type="entry name" value="T-box_DNA-bd"/>
</dbReference>
<dbReference type="InterPro" id="IPR036960">
    <property type="entry name" value="T-box_sf"/>
</dbReference>
<dbReference type="InterPro" id="IPR001699">
    <property type="entry name" value="TF_T-box"/>
</dbReference>
<dbReference type="InterPro" id="IPR018186">
    <property type="entry name" value="TF_T-box_CS"/>
</dbReference>
<dbReference type="PANTHER" id="PTHR11267">
    <property type="entry name" value="T-BOX PROTEIN-RELATED"/>
    <property type="match status" value="1"/>
</dbReference>
<dbReference type="PANTHER" id="PTHR11267:SF28">
    <property type="entry name" value="T-BOX TRANSCRIPTION FACTOR TBX5"/>
    <property type="match status" value="1"/>
</dbReference>
<dbReference type="Pfam" id="PF00907">
    <property type="entry name" value="T-box"/>
    <property type="match status" value="1"/>
</dbReference>
<dbReference type="PRINTS" id="PR00937">
    <property type="entry name" value="TBOX"/>
</dbReference>
<dbReference type="SMART" id="SM00425">
    <property type="entry name" value="TBOX"/>
    <property type="match status" value="1"/>
</dbReference>
<dbReference type="SUPFAM" id="SSF49417">
    <property type="entry name" value="p53-like transcription factors"/>
    <property type="match status" value="1"/>
</dbReference>
<dbReference type="PROSITE" id="PS01283">
    <property type="entry name" value="TBOX_1"/>
    <property type="match status" value="1"/>
</dbReference>
<dbReference type="PROSITE" id="PS01264">
    <property type="entry name" value="TBOX_2"/>
    <property type="match status" value="1"/>
</dbReference>
<dbReference type="PROSITE" id="PS50252">
    <property type="entry name" value="TBOX_3"/>
    <property type="match status" value="1"/>
</dbReference>
<reference key="1">
    <citation type="journal article" date="1998" name="Development">
        <title>Tbx genes and limb identity in chick embryo development.</title>
        <authorList>
            <person name="Issac A."/>
            <person name="Rodriguez-Esteban C."/>
            <person name="Ryan A."/>
            <person name="Altabef M."/>
            <person name="Tsukui T."/>
            <person name="Patel K."/>
            <person name="Tickle C."/>
            <person name="Izpisua-Belmonte J.-C."/>
        </authorList>
    </citation>
    <scope>NUCLEOTIDE SEQUENCE [MRNA]</scope>
    <scope>DEVELOPMENTAL STAGE</scope>
</reference>
<reference key="2">
    <citation type="journal article" date="1999" name="Dev. Biol.">
        <title>Chamber-specific cardiac expression of Tbx5 and heart defects in Holt-Oram syndrome.</title>
        <authorList>
            <person name="Bruneau B.G."/>
            <person name="Logan M."/>
            <person name="Davis N."/>
            <person name="Levi T."/>
            <person name="Tabin C.J."/>
            <person name="Seidman J.G."/>
            <person name="Seidman C.E."/>
        </authorList>
    </citation>
    <scope>NUCLEOTIDE SEQUENCE [MRNA]</scope>
    <scope>DEVELOPMENTAL STAGE</scope>
</reference>
<organism>
    <name type="scientific">Gallus gallus</name>
    <name type="common">Chicken</name>
    <dbReference type="NCBI Taxonomy" id="9031"/>
    <lineage>
        <taxon>Eukaryota</taxon>
        <taxon>Metazoa</taxon>
        <taxon>Chordata</taxon>
        <taxon>Craniata</taxon>
        <taxon>Vertebrata</taxon>
        <taxon>Euteleostomi</taxon>
        <taxon>Archelosauria</taxon>
        <taxon>Archosauria</taxon>
        <taxon>Dinosauria</taxon>
        <taxon>Saurischia</taxon>
        <taxon>Theropoda</taxon>
        <taxon>Coelurosauria</taxon>
        <taxon>Aves</taxon>
        <taxon>Neognathae</taxon>
        <taxon>Galloanserae</taxon>
        <taxon>Galliformes</taxon>
        <taxon>Phasianidae</taxon>
        <taxon>Phasianinae</taxon>
        <taxon>Gallus</taxon>
    </lineage>
</organism>
<name>TBX5_CHICK</name>
<comment type="function">
    <text evidence="1">DNA-binding protein that regulates the transcription of several genes and is involved in heart development and limb pattern formation. May bind to the core DNA motif of promoters.</text>
</comment>
<comment type="subunit">
    <text evidence="1">Monomer. Homodimer (via the T-box); binds DNA as homodimer.</text>
</comment>
<comment type="interaction">
    <interactant intactId="EBI-6663870">
        <id>Q9PWE8</id>
    </interactant>
    <interactant intactId="EBI-6693710">
        <id>Q679P3</id>
        <label>PDLIM7</label>
    </interactant>
    <organismsDiffer>false</organismsDiffer>
    <experiments>4</experiments>
</comment>
<comment type="subcellular location">
    <subcellularLocation>
        <location evidence="1 2">Nucleus</location>
    </subcellularLocation>
    <subcellularLocation>
        <location evidence="1">Cytoplasm</location>
    </subcellularLocation>
    <text evidence="1">Shuttles between the cytoplasm and the nucleus.</text>
</comment>
<comment type="developmental stage">
    <text evidence="4 5">Early in the developing heart, uniformly expressed throughout the entire cardiac crescent. Upon formation of the linear heart tube, expressed in a graded fashion, stronger near the posterior end and weaker at the anterior end. As the heart tube loops, asymmetric expression continues; it is expressed in the presumptive left ventricle, but not the right ventricle or outflow tract. This pattern of expression is maintained in more mature hearts (PubMed:10373308). First detected in the presumptive wing and leg mesoderm respectively at around stages 14-15. As limb outgrowth proceeds, expressed throughout the mesoderm and in the wing (PubMed:9550719).</text>
</comment>
<comment type="domain">
    <text evidence="1">The T-Box domain binds to double-stranded DNA.</text>
</comment>
<comment type="sequence caution" evidence="6">
    <conflict type="frameshift">
        <sequence resource="EMBL-CDS" id="AAC41299"/>
    </conflict>
</comment>
<feature type="chain" id="PRO_0000262467" description="T-box transcription factor TBX5">
    <location>
        <begin position="1"/>
        <end position="521"/>
    </location>
</feature>
<feature type="DNA-binding region" description="T-box" evidence="1 2">
    <location>
        <begin position="63"/>
        <end position="238"/>
    </location>
</feature>
<feature type="region of interest" description="Disordered" evidence="3">
    <location>
        <begin position="1"/>
        <end position="45"/>
    </location>
</feature>
<feature type="region of interest" description="Disordered" evidence="3">
    <location>
        <begin position="254"/>
        <end position="281"/>
    </location>
</feature>
<feature type="region of interest" description="Disordered" evidence="3">
    <location>
        <begin position="332"/>
        <end position="352"/>
    </location>
</feature>
<feature type="compositionally biased region" description="Basic and acidic residues" evidence="3">
    <location>
        <begin position="17"/>
        <end position="28"/>
    </location>
</feature>
<feature type="compositionally biased region" description="Polar residues" evidence="3">
    <location>
        <begin position="31"/>
        <end position="45"/>
    </location>
</feature>
<feature type="compositionally biased region" description="Polar residues" evidence="3">
    <location>
        <begin position="262"/>
        <end position="281"/>
    </location>
</feature>
<evidence type="ECO:0000250" key="1">
    <source>
        <dbReference type="UniProtKB" id="Q99593"/>
    </source>
</evidence>
<evidence type="ECO:0000255" key="2">
    <source>
        <dbReference type="PROSITE-ProRule" id="PRU00201"/>
    </source>
</evidence>
<evidence type="ECO:0000256" key="3">
    <source>
        <dbReference type="SAM" id="MobiDB-lite"/>
    </source>
</evidence>
<evidence type="ECO:0000269" key="4">
    <source>
    </source>
</evidence>
<evidence type="ECO:0000269" key="5">
    <source>
    </source>
</evidence>
<evidence type="ECO:0000305" key="6"/>
<proteinExistence type="evidence at protein level"/>
<keyword id="KW-0963">Cytoplasm</keyword>
<keyword id="KW-0238">DNA-binding</keyword>
<keyword id="KW-0539">Nucleus</keyword>
<keyword id="KW-1185">Reference proteome</keyword>
<keyword id="KW-0804">Transcription</keyword>
<keyword id="KW-0805">Transcription regulation</keyword>
<sequence length="521" mass="58402">MADTEEGFGLPSTPVDSEAKELQAEAKQDPQLGTTSKAPTSPQAAFTQQGMEGIKVFLHERELWLKFHEVGTEMIITKAGRRMFPSYKVKVTGLNPKTKYILLMDIVPADDHRYKFADNKWSVTGKAEPAMPGRLYVHPDSPATGAHWMRQLVSFQKLKLTNNHLDPFGHIILNSMHKYQPRLHIVKADENNGFGSKNTAFCTHVFPETAFIAVTSYQNHKITQLKIENNPFAKGFRGSDDMELHRMSRMQSKEYPVVPRSTVRQKVSSNHSPFSGETRVLSTSSNLGSQYQCENGVSSTSQDLLPPTNPYPISQEHSQIYHCTKRKDEECSTTEHPYKKPYMETSPAEEDPFYRSSYPQQQGLNTSYRTESAQRQACMYASSAPPTDPVPSLEDISCNTWPSVPSYSSCTVSAMQPMDRLPYQHFSAHFTSGPLMPRLSSVANHTSPQIGDTHSMFQHQTSVSHQPIVRQCGPQTGIQSPPSSLQPAEFLYSHGVPRTLSPHQYHSVHGVGMVPEWSENS</sequence>
<gene>
    <name type="primary">TBX5</name>
</gene>